<keyword id="KW-0227">DNA damage</keyword>
<keyword id="KW-0234">DNA repair</keyword>
<keyword id="KW-0238">DNA-binding</keyword>
<keyword id="KW-0326">Glycosidase</keyword>
<keyword id="KW-0378">Hydrolase</keyword>
<keyword id="KW-0456">Lyase</keyword>
<keyword id="KW-0479">Metal-binding</keyword>
<keyword id="KW-0511">Multifunctional enzyme</keyword>
<keyword id="KW-1185">Reference proteome</keyword>
<keyword id="KW-0862">Zinc</keyword>
<keyword id="KW-0863">Zinc-finger</keyword>
<sequence length="263" mass="29977">MPEGPEIRRAADHLEAAIKGKLLTDVWFAFAQLKPYESQLTGQMVTRIETRGKALLTHFSNGLTLYSHNQLYGVWRVIDTGEIPHTTRILRVRLQTADKTILLYSASDIEMLTAEQLTTHPFLQRVGPDVLDARLTPEEVKARLLSPRFRNRQFSGLLLDQAFLAGLGNYLRVEILWQSELTGQHKAKDLSEAQLNTLSHALLDIPRLSYATRGQTDENKHHGAQFRFKVFHRDGEACERCGGIIEKTTLSSRPFYWCPHCQK</sequence>
<proteinExistence type="inferred from homology"/>
<accession>A9MJM8</accession>
<reference key="1">
    <citation type="submission" date="2007-11" db="EMBL/GenBank/DDBJ databases">
        <authorList>
            <consortium name="The Salmonella enterica serovar Arizonae Genome Sequencing Project"/>
            <person name="McClelland M."/>
            <person name="Sanderson E.K."/>
            <person name="Porwollik S."/>
            <person name="Spieth J."/>
            <person name="Clifton W.S."/>
            <person name="Fulton R."/>
            <person name="Chunyan W."/>
            <person name="Wollam A."/>
            <person name="Shah N."/>
            <person name="Pepin K."/>
            <person name="Bhonagiri V."/>
            <person name="Nash W."/>
            <person name="Johnson M."/>
            <person name="Thiruvilangam P."/>
            <person name="Wilson R."/>
        </authorList>
    </citation>
    <scope>NUCLEOTIDE SEQUENCE [LARGE SCALE GENOMIC DNA]</scope>
    <source>
        <strain>ATCC BAA-731 / CDC346-86 / RSK2980</strain>
    </source>
</reference>
<comment type="function">
    <text evidence="1">Involved in base excision repair of DNA damaged by oxidation or by mutagenic agents. Acts as a DNA glycosylase that recognizes and removes damaged bases. Has a preference for oxidized pyrimidines, such as thymine glycol, 5,6-dihydrouracil and 5,6-dihydrothymine. Has AP (apurinic/apyrimidinic) lyase activity and introduces nicks in the DNA strand. Cleaves the DNA backbone by beta-delta elimination to generate a single-strand break at the site of the removed base with both 3'- and 5'-phosphates.</text>
</comment>
<comment type="catalytic activity">
    <reaction evidence="1">
        <text>2'-deoxyribonucleotide-(2'-deoxyribose 5'-phosphate)-2'-deoxyribonucleotide-DNA = a 3'-end 2'-deoxyribonucleotide-(2,3-dehydro-2,3-deoxyribose 5'-phosphate)-DNA + a 5'-end 5'-phospho-2'-deoxyribonucleoside-DNA + H(+)</text>
        <dbReference type="Rhea" id="RHEA:66592"/>
        <dbReference type="Rhea" id="RHEA-COMP:13180"/>
        <dbReference type="Rhea" id="RHEA-COMP:16897"/>
        <dbReference type="Rhea" id="RHEA-COMP:17067"/>
        <dbReference type="ChEBI" id="CHEBI:15378"/>
        <dbReference type="ChEBI" id="CHEBI:136412"/>
        <dbReference type="ChEBI" id="CHEBI:157695"/>
        <dbReference type="ChEBI" id="CHEBI:167181"/>
        <dbReference type="EC" id="4.2.99.18"/>
    </reaction>
</comment>
<comment type="cofactor">
    <cofactor evidence="1">
        <name>Zn(2+)</name>
        <dbReference type="ChEBI" id="CHEBI:29105"/>
    </cofactor>
    <text evidence="1">Binds 1 zinc ion per subunit.</text>
</comment>
<comment type="similarity">
    <text evidence="1">Belongs to the FPG family.</text>
</comment>
<name>END8_SALAR</name>
<gene>
    <name evidence="1" type="primary">nei</name>
    <name type="ordered locus">SARI_02219</name>
</gene>
<feature type="initiator methionine" description="Removed" evidence="1">
    <location>
        <position position="1"/>
    </location>
</feature>
<feature type="chain" id="PRO_1000085801" description="Endonuclease 8">
    <location>
        <begin position="2"/>
        <end position="263"/>
    </location>
</feature>
<feature type="zinc finger region" description="FPG-type" evidence="1">
    <location>
        <begin position="229"/>
        <end position="263"/>
    </location>
</feature>
<feature type="active site" description="Schiff-base intermediate with DNA" evidence="1">
    <location>
        <position position="2"/>
    </location>
</feature>
<feature type="active site" description="Proton donor" evidence="1">
    <location>
        <position position="3"/>
    </location>
</feature>
<feature type="active site" description="Proton donor; for beta-elimination activity" evidence="1">
    <location>
        <position position="53"/>
    </location>
</feature>
<feature type="active site" description="Proton donor; for delta-elimination activity" evidence="1">
    <location>
        <position position="253"/>
    </location>
</feature>
<feature type="binding site" evidence="1">
    <location>
        <position position="70"/>
    </location>
    <ligand>
        <name>DNA</name>
        <dbReference type="ChEBI" id="CHEBI:16991"/>
    </ligand>
</feature>
<feature type="binding site" evidence="1">
    <location>
        <position position="125"/>
    </location>
    <ligand>
        <name>DNA</name>
        <dbReference type="ChEBI" id="CHEBI:16991"/>
    </ligand>
</feature>
<feature type="binding site" evidence="1">
    <location>
        <position position="169"/>
    </location>
    <ligand>
        <name>DNA</name>
        <dbReference type="ChEBI" id="CHEBI:16991"/>
    </ligand>
</feature>
<dbReference type="EC" id="3.2.2.-" evidence="1"/>
<dbReference type="EC" id="4.2.99.18" evidence="1"/>
<dbReference type="EMBL" id="CP000880">
    <property type="protein sequence ID" value="ABX22091.1"/>
    <property type="molecule type" value="Genomic_DNA"/>
</dbReference>
<dbReference type="SMR" id="A9MJM8"/>
<dbReference type="STRING" id="41514.SARI_02219"/>
<dbReference type="KEGG" id="ses:SARI_02219"/>
<dbReference type="HOGENOM" id="CLU_038423_2_2_6"/>
<dbReference type="Proteomes" id="UP000002084">
    <property type="component" value="Chromosome"/>
</dbReference>
<dbReference type="GO" id="GO:0140078">
    <property type="term" value="F:class I DNA-(apurinic or apyrimidinic site) endonuclease activity"/>
    <property type="evidence" value="ECO:0007669"/>
    <property type="project" value="UniProtKB-EC"/>
</dbReference>
<dbReference type="GO" id="GO:0003684">
    <property type="term" value="F:damaged DNA binding"/>
    <property type="evidence" value="ECO:0007669"/>
    <property type="project" value="InterPro"/>
</dbReference>
<dbReference type="GO" id="GO:0000703">
    <property type="term" value="F:oxidized pyrimidine nucleobase lesion DNA N-glycosylase activity"/>
    <property type="evidence" value="ECO:0007669"/>
    <property type="project" value="UniProtKB-UniRule"/>
</dbReference>
<dbReference type="GO" id="GO:0008270">
    <property type="term" value="F:zinc ion binding"/>
    <property type="evidence" value="ECO:0007669"/>
    <property type="project" value="UniProtKB-UniRule"/>
</dbReference>
<dbReference type="GO" id="GO:0006284">
    <property type="term" value="P:base-excision repair"/>
    <property type="evidence" value="ECO:0007669"/>
    <property type="project" value="InterPro"/>
</dbReference>
<dbReference type="CDD" id="cd08965">
    <property type="entry name" value="EcNei-like_N"/>
    <property type="match status" value="1"/>
</dbReference>
<dbReference type="FunFam" id="1.10.8.50:FF:000005">
    <property type="entry name" value="Endonuclease 8"/>
    <property type="match status" value="1"/>
</dbReference>
<dbReference type="FunFam" id="3.20.190.10:FF:000002">
    <property type="entry name" value="Endonuclease 8"/>
    <property type="match status" value="1"/>
</dbReference>
<dbReference type="Gene3D" id="1.10.8.50">
    <property type="match status" value="1"/>
</dbReference>
<dbReference type="Gene3D" id="3.20.190.10">
    <property type="entry name" value="MutM-like, N-terminal"/>
    <property type="match status" value="1"/>
</dbReference>
<dbReference type="HAMAP" id="MF_01253">
    <property type="entry name" value="Endonuclease_8"/>
    <property type="match status" value="1"/>
</dbReference>
<dbReference type="InterPro" id="IPR015886">
    <property type="entry name" value="DNA_glyclase/AP_lyase_DNA-bd"/>
</dbReference>
<dbReference type="InterPro" id="IPR015887">
    <property type="entry name" value="DNA_glyclase_Znf_dom_DNA_BS"/>
</dbReference>
<dbReference type="InterPro" id="IPR044091">
    <property type="entry name" value="EcNei-like_N"/>
</dbReference>
<dbReference type="InterPro" id="IPR023713">
    <property type="entry name" value="Endonuclease-VIII"/>
</dbReference>
<dbReference type="InterPro" id="IPR012319">
    <property type="entry name" value="FPG_cat"/>
</dbReference>
<dbReference type="InterPro" id="IPR035937">
    <property type="entry name" value="MutM-like_N-ter"/>
</dbReference>
<dbReference type="InterPro" id="IPR010979">
    <property type="entry name" value="Ribosomal_uS13-like_H2TH"/>
</dbReference>
<dbReference type="InterPro" id="IPR000214">
    <property type="entry name" value="Znf_DNA_glyclase/AP_lyase"/>
</dbReference>
<dbReference type="InterPro" id="IPR010663">
    <property type="entry name" value="Znf_FPG/IleRS"/>
</dbReference>
<dbReference type="NCBIfam" id="NF007763">
    <property type="entry name" value="PRK10445.1"/>
    <property type="match status" value="1"/>
</dbReference>
<dbReference type="PANTHER" id="PTHR42697">
    <property type="entry name" value="ENDONUCLEASE 8"/>
    <property type="match status" value="1"/>
</dbReference>
<dbReference type="PANTHER" id="PTHR42697:SF1">
    <property type="entry name" value="ENDONUCLEASE 8"/>
    <property type="match status" value="1"/>
</dbReference>
<dbReference type="Pfam" id="PF01149">
    <property type="entry name" value="Fapy_DNA_glyco"/>
    <property type="match status" value="1"/>
</dbReference>
<dbReference type="Pfam" id="PF06831">
    <property type="entry name" value="H2TH"/>
    <property type="match status" value="1"/>
</dbReference>
<dbReference type="Pfam" id="PF06827">
    <property type="entry name" value="zf-FPG_IleRS"/>
    <property type="match status" value="1"/>
</dbReference>
<dbReference type="SMART" id="SM00898">
    <property type="entry name" value="Fapy_DNA_glyco"/>
    <property type="match status" value="1"/>
</dbReference>
<dbReference type="SMART" id="SM01232">
    <property type="entry name" value="H2TH"/>
    <property type="match status" value="1"/>
</dbReference>
<dbReference type="SUPFAM" id="SSF57716">
    <property type="entry name" value="Glucocorticoid receptor-like (DNA-binding domain)"/>
    <property type="match status" value="1"/>
</dbReference>
<dbReference type="SUPFAM" id="SSF81624">
    <property type="entry name" value="N-terminal domain of MutM-like DNA repair proteins"/>
    <property type="match status" value="1"/>
</dbReference>
<dbReference type="SUPFAM" id="SSF46946">
    <property type="entry name" value="S13-like H2TH domain"/>
    <property type="match status" value="1"/>
</dbReference>
<dbReference type="PROSITE" id="PS51068">
    <property type="entry name" value="FPG_CAT"/>
    <property type="match status" value="1"/>
</dbReference>
<dbReference type="PROSITE" id="PS01242">
    <property type="entry name" value="ZF_FPG_1"/>
    <property type="match status" value="1"/>
</dbReference>
<dbReference type="PROSITE" id="PS51066">
    <property type="entry name" value="ZF_FPG_2"/>
    <property type="match status" value="1"/>
</dbReference>
<evidence type="ECO:0000255" key="1">
    <source>
        <dbReference type="HAMAP-Rule" id="MF_01253"/>
    </source>
</evidence>
<protein>
    <recommendedName>
        <fullName evidence="1">Endonuclease 8</fullName>
    </recommendedName>
    <alternativeName>
        <fullName evidence="1">DNA glycosylase/AP lyase Nei</fullName>
        <ecNumber evidence="1">3.2.2.-</ecNumber>
        <ecNumber evidence="1">4.2.99.18</ecNumber>
    </alternativeName>
    <alternativeName>
        <fullName evidence="1">DNA-(apurinic or apyrimidinic site) lyase Nei</fullName>
    </alternativeName>
    <alternativeName>
        <fullName evidence="1">Endonuclease VIII</fullName>
    </alternativeName>
</protein>
<organism>
    <name type="scientific">Salmonella arizonae (strain ATCC BAA-731 / CDC346-86 / RSK2980)</name>
    <dbReference type="NCBI Taxonomy" id="41514"/>
    <lineage>
        <taxon>Bacteria</taxon>
        <taxon>Pseudomonadati</taxon>
        <taxon>Pseudomonadota</taxon>
        <taxon>Gammaproteobacteria</taxon>
        <taxon>Enterobacterales</taxon>
        <taxon>Enterobacteriaceae</taxon>
        <taxon>Salmonella</taxon>
    </lineage>
</organism>